<proteinExistence type="inferred from homology"/>
<gene>
    <name evidence="1" type="primary">rplA</name>
    <name type="ordered locus">BCAH820_0109</name>
</gene>
<keyword id="KW-0678">Repressor</keyword>
<keyword id="KW-0687">Ribonucleoprotein</keyword>
<keyword id="KW-0689">Ribosomal protein</keyword>
<keyword id="KW-0694">RNA-binding</keyword>
<keyword id="KW-0699">rRNA-binding</keyword>
<keyword id="KW-0810">Translation regulation</keyword>
<keyword id="KW-0820">tRNA-binding</keyword>
<organism>
    <name type="scientific">Bacillus cereus (strain AH820)</name>
    <dbReference type="NCBI Taxonomy" id="405535"/>
    <lineage>
        <taxon>Bacteria</taxon>
        <taxon>Bacillati</taxon>
        <taxon>Bacillota</taxon>
        <taxon>Bacilli</taxon>
        <taxon>Bacillales</taxon>
        <taxon>Bacillaceae</taxon>
        <taxon>Bacillus</taxon>
        <taxon>Bacillus cereus group</taxon>
    </lineage>
</organism>
<feature type="chain" id="PRO_1000141357" description="Large ribosomal subunit protein uL1">
    <location>
        <begin position="1"/>
        <end position="230"/>
    </location>
</feature>
<accession>B7JKA6</accession>
<evidence type="ECO:0000255" key="1">
    <source>
        <dbReference type="HAMAP-Rule" id="MF_01318"/>
    </source>
</evidence>
<evidence type="ECO:0000305" key="2"/>
<dbReference type="EMBL" id="CP001283">
    <property type="protein sequence ID" value="ACK90151.1"/>
    <property type="molecule type" value="Genomic_DNA"/>
</dbReference>
<dbReference type="RefSeq" id="WP_002020168.1">
    <property type="nucleotide sequence ID" value="NC_011773.1"/>
</dbReference>
<dbReference type="SMR" id="B7JKA6"/>
<dbReference type="GeneID" id="93010955"/>
<dbReference type="KEGG" id="bcu:BCAH820_0109"/>
<dbReference type="HOGENOM" id="CLU_062853_0_0_9"/>
<dbReference type="Proteomes" id="UP000001363">
    <property type="component" value="Chromosome"/>
</dbReference>
<dbReference type="GO" id="GO:0015934">
    <property type="term" value="C:large ribosomal subunit"/>
    <property type="evidence" value="ECO:0007669"/>
    <property type="project" value="InterPro"/>
</dbReference>
<dbReference type="GO" id="GO:0019843">
    <property type="term" value="F:rRNA binding"/>
    <property type="evidence" value="ECO:0007669"/>
    <property type="project" value="UniProtKB-UniRule"/>
</dbReference>
<dbReference type="GO" id="GO:0003735">
    <property type="term" value="F:structural constituent of ribosome"/>
    <property type="evidence" value="ECO:0007669"/>
    <property type="project" value="InterPro"/>
</dbReference>
<dbReference type="GO" id="GO:0000049">
    <property type="term" value="F:tRNA binding"/>
    <property type="evidence" value="ECO:0007669"/>
    <property type="project" value="UniProtKB-KW"/>
</dbReference>
<dbReference type="GO" id="GO:0006417">
    <property type="term" value="P:regulation of translation"/>
    <property type="evidence" value="ECO:0007669"/>
    <property type="project" value="UniProtKB-KW"/>
</dbReference>
<dbReference type="GO" id="GO:0006412">
    <property type="term" value="P:translation"/>
    <property type="evidence" value="ECO:0007669"/>
    <property type="project" value="UniProtKB-UniRule"/>
</dbReference>
<dbReference type="CDD" id="cd00403">
    <property type="entry name" value="Ribosomal_L1"/>
    <property type="match status" value="1"/>
</dbReference>
<dbReference type="FunFam" id="3.40.50.790:FF:000001">
    <property type="entry name" value="50S ribosomal protein L1"/>
    <property type="match status" value="1"/>
</dbReference>
<dbReference type="Gene3D" id="3.30.190.20">
    <property type="match status" value="1"/>
</dbReference>
<dbReference type="Gene3D" id="3.40.50.790">
    <property type="match status" value="1"/>
</dbReference>
<dbReference type="HAMAP" id="MF_01318_B">
    <property type="entry name" value="Ribosomal_uL1_B"/>
    <property type="match status" value="1"/>
</dbReference>
<dbReference type="InterPro" id="IPR005878">
    <property type="entry name" value="Ribosom_uL1_bac-type"/>
</dbReference>
<dbReference type="InterPro" id="IPR002143">
    <property type="entry name" value="Ribosomal_uL1"/>
</dbReference>
<dbReference type="InterPro" id="IPR023674">
    <property type="entry name" value="Ribosomal_uL1-like"/>
</dbReference>
<dbReference type="InterPro" id="IPR028364">
    <property type="entry name" value="Ribosomal_uL1/biogenesis"/>
</dbReference>
<dbReference type="InterPro" id="IPR016095">
    <property type="entry name" value="Ribosomal_uL1_3-a/b-sand"/>
</dbReference>
<dbReference type="InterPro" id="IPR023673">
    <property type="entry name" value="Ribosomal_uL1_CS"/>
</dbReference>
<dbReference type="NCBIfam" id="TIGR01169">
    <property type="entry name" value="rplA_bact"/>
    <property type="match status" value="1"/>
</dbReference>
<dbReference type="PANTHER" id="PTHR36427">
    <property type="entry name" value="54S RIBOSOMAL PROTEIN L1, MITOCHONDRIAL"/>
    <property type="match status" value="1"/>
</dbReference>
<dbReference type="PANTHER" id="PTHR36427:SF3">
    <property type="entry name" value="LARGE RIBOSOMAL SUBUNIT PROTEIN UL1M"/>
    <property type="match status" value="1"/>
</dbReference>
<dbReference type="Pfam" id="PF00687">
    <property type="entry name" value="Ribosomal_L1"/>
    <property type="match status" value="1"/>
</dbReference>
<dbReference type="PIRSF" id="PIRSF002155">
    <property type="entry name" value="Ribosomal_L1"/>
    <property type="match status" value="1"/>
</dbReference>
<dbReference type="SUPFAM" id="SSF56808">
    <property type="entry name" value="Ribosomal protein L1"/>
    <property type="match status" value="1"/>
</dbReference>
<dbReference type="PROSITE" id="PS01199">
    <property type="entry name" value="RIBOSOMAL_L1"/>
    <property type="match status" value="1"/>
</dbReference>
<name>RL1_BACC0</name>
<protein>
    <recommendedName>
        <fullName evidence="1">Large ribosomal subunit protein uL1</fullName>
    </recommendedName>
    <alternativeName>
        <fullName evidence="2">50S ribosomal protein L1</fullName>
    </alternativeName>
</protein>
<reference key="1">
    <citation type="submission" date="2008-10" db="EMBL/GenBank/DDBJ databases">
        <title>Genome sequence of Bacillus cereus AH820.</title>
        <authorList>
            <person name="Dodson R.J."/>
            <person name="Durkin A.S."/>
            <person name="Rosovitz M.J."/>
            <person name="Rasko D.A."/>
            <person name="Hoffmaster A."/>
            <person name="Ravel J."/>
            <person name="Sutton G."/>
        </authorList>
    </citation>
    <scope>NUCLEOTIDE SEQUENCE [LARGE SCALE GENOMIC DNA]</scope>
    <source>
        <strain>AH820</strain>
    </source>
</reference>
<comment type="function">
    <text evidence="1">Binds directly to 23S rRNA. The L1 stalk is quite mobile in the ribosome, and is involved in E site tRNA release.</text>
</comment>
<comment type="function">
    <text evidence="1">Protein L1 is also a translational repressor protein, it controls the translation of the L11 operon by binding to its mRNA.</text>
</comment>
<comment type="subunit">
    <text evidence="1">Part of the 50S ribosomal subunit.</text>
</comment>
<comment type="similarity">
    <text evidence="1">Belongs to the universal ribosomal protein uL1 family.</text>
</comment>
<sequence>MAKRGKKYVEAAKLVDRAAAYSATEAVELVKKTNTAKFDATVEAAFRLGVDPKKADQQIRGAVVLPHGTGKVQRVLVFAKGEKAKEAEAAGADFVGDADYIGKIQQGWFDFDVVVATPDMMGEVGKLGRVLGPKGLMPNPKTGTVTFDVTKAVNEIKAGKVEYRVDKAGNIHVPIGKVSFEDAKLVENFRTIADTLQKVKPAAAKGTYMKNVTVASTMGPGVRVDVSTLA</sequence>